<organism>
    <name type="scientific">Salmonella dublin (strain CT_02021853)</name>
    <dbReference type="NCBI Taxonomy" id="439851"/>
    <lineage>
        <taxon>Bacteria</taxon>
        <taxon>Pseudomonadati</taxon>
        <taxon>Pseudomonadota</taxon>
        <taxon>Gammaproteobacteria</taxon>
        <taxon>Enterobacterales</taxon>
        <taxon>Enterobacteriaceae</taxon>
        <taxon>Salmonella</taxon>
    </lineage>
</organism>
<accession>B5FIA8</accession>
<proteinExistence type="inferred from homology"/>
<sequence>MDYEFLRDVTGGVKVRMSMGHEVVGHWFNEEVKDNLSLLDEVEQAARTVKGSERSWQRAGHEYTIWMDGEEVMIRANQLDFSGDEMEEGMSYYDEESLSLCGMEDFLRVVAAYREFVSKA</sequence>
<feature type="chain" id="PRO_1000136302" description="UPF0231 protein YacL">
    <location>
        <begin position="1"/>
        <end position="120"/>
    </location>
</feature>
<protein>
    <recommendedName>
        <fullName evidence="1">UPF0231 protein YacL</fullName>
    </recommendedName>
</protein>
<gene>
    <name evidence="1" type="primary">yacL</name>
    <name type="ordered locus">SeD_A0175</name>
</gene>
<comment type="similarity">
    <text evidence="1">Belongs to the UPF0231 family.</text>
</comment>
<evidence type="ECO:0000255" key="1">
    <source>
        <dbReference type="HAMAP-Rule" id="MF_01053"/>
    </source>
</evidence>
<dbReference type="EMBL" id="CP001144">
    <property type="protein sequence ID" value="ACH76892.1"/>
    <property type="molecule type" value="Genomic_DNA"/>
</dbReference>
<dbReference type="RefSeq" id="WP_000384308.1">
    <property type="nucleotide sequence ID" value="NC_011205.1"/>
</dbReference>
<dbReference type="SMR" id="B5FIA8"/>
<dbReference type="KEGG" id="sed:SeD_A0175"/>
<dbReference type="HOGENOM" id="CLU_139226_0_0_6"/>
<dbReference type="Proteomes" id="UP000008322">
    <property type="component" value="Chromosome"/>
</dbReference>
<dbReference type="HAMAP" id="MF_01053">
    <property type="entry name" value="UPF0231"/>
    <property type="match status" value="1"/>
</dbReference>
<dbReference type="InterPro" id="IPR008249">
    <property type="entry name" value="UPF0231"/>
</dbReference>
<dbReference type="NCBIfam" id="NF003574">
    <property type="entry name" value="PRK05248.1-1"/>
    <property type="match status" value="1"/>
</dbReference>
<dbReference type="NCBIfam" id="NF003576">
    <property type="entry name" value="PRK05248.1-3"/>
    <property type="match status" value="1"/>
</dbReference>
<dbReference type="Pfam" id="PF06062">
    <property type="entry name" value="UPF0231"/>
    <property type="match status" value="1"/>
</dbReference>
<dbReference type="PIRSF" id="PIRSF006287">
    <property type="entry name" value="UCP006287"/>
    <property type="match status" value="1"/>
</dbReference>
<name>YACL_SALDC</name>
<reference key="1">
    <citation type="journal article" date="2011" name="J. Bacteriol.">
        <title>Comparative genomics of 28 Salmonella enterica isolates: evidence for CRISPR-mediated adaptive sublineage evolution.</title>
        <authorList>
            <person name="Fricke W.F."/>
            <person name="Mammel M.K."/>
            <person name="McDermott P.F."/>
            <person name="Tartera C."/>
            <person name="White D.G."/>
            <person name="Leclerc J.E."/>
            <person name="Ravel J."/>
            <person name="Cebula T.A."/>
        </authorList>
    </citation>
    <scope>NUCLEOTIDE SEQUENCE [LARGE SCALE GENOMIC DNA]</scope>
    <source>
        <strain>CT_02021853</strain>
    </source>
</reference>